<gene>
    <name type="ordered locus">CPn_0561</name>
    <name type="ordered locus">CP_0189</name>
    <name type="ordered locus">CPj0561</name>
    <name type="ordered locus">CpB0583</name>
</gene>
<evidence type="ECO:0000256" key="1">
    <source>
        <dbReference type="SAM" id="MobiDB-lite"/>
    </source>
</evidence>
<evidence type="ECO:0000305" key="2"/>
<comment type="similarity">
    <text evidence="2">Belongs to the EUO family.</text>
</comment>
<reference key="1">
    <citation type="journal article" date="1999" name="Nat. Genet.">
        <title>Comparative genomes of Chlamydia pneumoniae and C. trachomatis.</title>
        <authorList>
            <person name="Kalman S."/>
            <person name="Mitchell W.P."/>
            <person name="Marathe R."/>
            <person name="Lammel C.J."/>
            <person name="Fan J."/>
            <person name="Hyman R.W."/>
            <person name="Olinger L."/>
            <person name="Grimwood J."/>
            <person name="Davis R.W."/>
            <person name="Stephens R.S."/>
        </authorList>
    </citation>
    <scope>NUCLEOTIDE SEQUENCE [LARGE SCALE GENOMIC DNA]</scope>
    <source>
        <strain>CWL029</strain>
    </source>
</reference>
<reference key="2">
    <citation type="journal article" date="2000" name="Nucleic Acids Res.">
        <title>Genome sequences of Chlamydia trachomatis MoPn and Chlamydia pneumoniae AR39.</title>
        <authorList>
            <person name="Read T.D."/>
            <person name="Brunham R.C."/>
            <person name="Shen C."/>
            <person name="Gill S.R."/>
            <person name="Heidelberg J.F."/>
            <person name="White O."/>
            <person name="Hickey E.K."/>
            <person name="Peterson J.D."/>
            <person name="Utterback T.R."/>
            <person name="Berry K.J."/>
            <person name="Bass S."/>
            <person name="Linher K.D."/>
            <person name="Weidman J.F."/>
            <person name="Khouri H.M."/>
            <person name="Craven B."/>
            <person name="Bowman C."/>
            <person name="Dodson R.J."/>
            <person name="Gwinn M.L."/>
            <person name="Nelson W.C."/>
            <person name="DeBoy R.T."/>
            <person name="Kolonay J.F."/>
            <person name="McClarty G."/>
            <person name="Salzberg S.L."/>
            <person name="Eisen J.A."/>
            <person name="Fraser C.M."/>
        </authorList>
    </citation>
    <scope>NUCLEOTIDE SEQUENCE [LARGE SCALE GENOMIC DNA]</scope>
    <source>
        <strain>AR39</strain>
    </source>
</reference>
<reference key="3">
    <citation type="journal article" date="2000" name="Nucleic Acids Res.">
        <title>Comparison of whole genome sequences of Chlamydia pneumoniae J138 from Japan and CWL029 from USA.</title>
        <authorList>
            <person name="Shirai M."/>
            <person name="Hirakawa H."/>
            <person name="Kimoto M."/>
            <person name="Tabuchi M."/>
            <person name="Kishi F."/>
            <person name="Ouchi K."/>
            <person name="Shiba T."/>
            <person name="Ishii K."/>
            <person name="Hattori M."/>
            <person name="Kuhara S."/>
            <person name="Nakazawa T."/>
        </authorList>
    </citation>
    <scope>NUCLEOTIDE SEQUENCE [LARGE SCALE GENOMIC DNA]</scope>
    <source>
        <strain>J138</strain>
    </source>
</reference>
<reference key="4">
    <citation type="submission" date="2002-05" db="EMBL/GenBank/DDBJ databases">
        <title>The genome sequence of Chlamydia pneumoniae TW183 and comparison with other Chlamydia strains based on whole genome sequence analysis.</title>
        <authorList>
            <person name="Geng M.M."/>
            <person name="Schuhmacher A."/>
            <person name="Muehldorfer I."/>
            <person name="Bensch K.W."/>
            <person name="Schaefer K.P."/>
            <person name="Schneider S."/>
            <person name="Pohl T."/>
            <person name="Essig A."/>
            <person name="Marre R."/>
            <person name="Melchers K."/>
        </authorList>
    </citation>
    <scope>NUCLEOTIDE SEQUENCE [LARGE SCALE GENOMIC DNA]</scope>
    <source>
        <strain>TW-183</strain>
    </source>
</reference>
<organism>
    <name type="scientific">Chlamydia pneumoniae</name>
    <name type="common">Chlamydophila pneumoniae</name>
    <dbReference type="NCBI Taxonomy" id="83558"/>
    <lineage>
        <taxon>Bacteria</taxon>
        <taxon>Pseudomonadati</taxon>
        <taxon>Chlamydiota</taxon>
        <taxon>Chlamydiia</taxon>
        <taxon>Chlamydiales</taxon>
        <taxon>Chlamydiaceae</taxon>
        <taxon>Chlamydia/Chlamydophila group</taxon>
        <taxon>Chlamydia</taxon>
    </lineage>
</organism>
<accession>Q9Z7Z2</accession>
<accession>Q9JQI3</accession>
<dbReference type="EMBL" id="AE001363">
    <property type="protein sequence ID" value="AAD18701.1"/>
    <property type="molecule type" value="Genomic_DNA"/>
</dbReference>
<dbReference type="EMBL" id="AE002161">
    <property type="protein sequence ID" value="AAF38062.1"/>
    <property type="molecule type" value="Genomic_DNA"/>
</dbReference>
<dbReference type="EMBL" id="BA000008">
    <property type="protein sequence ID" value="BAA98767.1"/>
    <property type="molecule type" value="Genomic_DNA"/>
</dbReference>
<dbReference type="EMBL" id="AE009440">
    <property type="protein sequence ID" value="AAP98512.1"/>
    <property type="molecule type" value="Genomic_DNA"/>
</dbReference>
<dbReference type="PIR" id="D72064">
    <property type="entry name" value="D72064"/>
</dbReference>
<dbReference type="PIR" id="E86560">
    <property type="entry name" value="E86560"/>
</dbReference>
<dbReference type="RefSeq" id="NP_224757.1">
    <property type="nucleotide sequence ID" value="NC_000922.1"/>
</dbReference>
<dbReference type="RefSeq" id="WP_010883199.1">
    <property type="nucleotide sequence ID" value="NZ_LN847257.1"/>
</dbReference>
<dbReference type="STRING" id="406984.CPK_ORF01075"/>
<dbReference type="GeneID" id="45050605"/>
<dbReference type="KEGG" id="cpa:CP_0189"/>
<dbReference type="KEGG" id="cpj:euo"/>
<dbReference type="KEGG" id="cpn:CPn_0561"/>
<dbReference type="KEGG" id="cpt:CpB0583"/>
<dbReference type="PATRIC" id="fig|115713.3.peg.623"/>
<dbReference type="eggNOG" id="ENOG5030EXK">
    <property type="taxonomic scope" value="Bacteria"/>
</dbReference>
<dbReference type="HOGENOM" id="CLU_138391_0_0_0"/>
<dbReference type="OMA" id="HESCFDL"/>
<dbReference type="Proteomes" id="UP000000583">
    <property type="component" value="Chromosome"/>
</dbReference>
<dbReference type="Proteomes" id="UP000000801">
    <property type="component" value="Chromosome"/>
</dbReference>
<dbReference type="InterPro" id="IPR041657">
    <property type="entry name" value="HTH_17"/>
</dbReference>
<dbReference type="Pfam" id="PF12728">
    <property type="entry name" value="HTH_17"/>
    <property type="match status" value="2"/>
</dbReference>
<protein>
    <recommendedName>
        <fullName>Uncharacterized protein CPn_0561/CP_0189/CPj0561/CpB0583</fullName>
    </recommendedName>
    <alternativeName>
        <fullName>EUO</fullName>
    </alternativeName>
</protein>
<name>Y561_CHLPN</name>
<feature type="chain" id="PRO_0000218395" description="Uncharacterized protein CPn_0561/CP_0189/CPj0561/CpB0583">
    <location>
        <begin position="1"/>
        <end position="178"/>
    </location>
</feature>
<feature type="region of interest" description="Disordered" evidence="1">
    <location>
        <begin position="152"/>
        <end position="178"/>
    </location>
</feature>
<proteinExistence type="inferred from homology"/>
<sequence>MACEQHEGCYELEEREEIEDIKDSDTKWVSITQAAKLHNVTRQAIYVAIKQKKLKASKETRWEIDIKDLEEYKRNRYSRKKSLYQGELVFDNGKGCYSINQVAQILGIPVQKVYYATRTGTIRGERKGAAWVIHVSEIERYKNEYLSKQAAKKLKGAEPKEHQAPNFEPPTEIFPESN</sequence>